<protein>
    <recommendedName>
        <fullName evidence="1">Malonate decarboxylase acyl carrier protein</fullName>
    </recommendedName>
    <alternativeName>
        <fullName evidence="1">Malonate decarboxylase subunit delta</fullName>
    </alternativeName>
</protein>
<proteinExistence type="inferred from homology"/>
<evidence type="ECO:0000255" key="1">
    <source>
        <dbReference type="HAMAP-Rule" id="MF_00710"/>
    </source>
</evidence>
<reference key="1">
    <citation type="submission" date="2007-06" db="EMBL/GenBank/DDBJ databases">
        <authorList>
            <person name="Dodson R.J."/>
            <person name="Harkins D."/>
            <person name="Paulsen I.T."/>
        </authorList>
    </citation>
    <scope>NUCLEOTIDE SEQUENCE [LARGE SCALE GENOMIC DNA]</scope>
    <source>
        <strain>DSM 24068 / PA7</strain>
    </source>
</reference>
<name>MDCC_PSEP7</name>
<organism>
    <name type="scientific">Pseudomonas paraeruginosa (strain DSM 24068 / PA7)</name>
    <name type="common">Pseudomonas aeruginosa (strain PA7)</name>
    <dbReference type="NCBI Taxonomy" id="381754"/>
    <lineage>
        <taxon>Bacteria</taxon>
        <taxon>Pseudomonadati</taxon>
        <taxon>Pseudomonadota</taxon>
        <taxon>Gammaproteobacteria</taxon>
        <taxon>Pseudomonadales</taxon>
        <taxon>Pseudomonadaceae</taxon>
        <taxon>Pseudomonas</taxon>
        <taxon>Pseudomonas paraeruginosa</taxon>
    </lineage>
</organism>
<dbReference type="EMBL" id="CP000744">
    <property type="protein sequence ID" value="ABR84687.1"/>
    <property type="molecule type" value="Genomic_DNA"/>
</dbReference>
<dbReference type="RefSeq" id="WP_012073852.1">
    <property type="nucleotide sequence ID" value="NC_009656.1"/>
</dbReference>
<dbReference type="SMR" id="A6UY05"/>
<dbReference type="GeneID" id="77218745"/>
<dbReference type="KEGG" id="pap:PSPA7_0294"/>
<dbReference type="HOGENOM" id="CLU_173135_1_0_6"/>
<dbReference type="Proteomes" id="UP000001582">
    <property type="component" value="Chromosome"/>
</dbReference>
<dbReference type="GO" id="GO:0005737">
    <property type="term" value="C:cytoplasm"/>
    <property type="evidence" value="ECO:0007669"/>
    <property type="project" value="UniProtKB-SubCell"/>
</dbReference>
<dbReference type="GO" id="GO:0000036">
    <property type="term" value="F:acyl carrier activity"/>
    <property type="evidence" value="ECO:0007669"/>
    <property type="project" value="UniProtKB-UniRule"/>
</dbReference>
<dbReference type="HAMAP" id="MF_00710">
    <property type="entry name" value="Malonate_deCO2ase_dsu"/>
    <property type="match status" value="1"/>
</dbReference>
<dbReference type="InterPro" id="IPR023439">
    <property type="entry name" value="Mal_deCO2ase/Cit_lyase_ACP"/>
</dbReference>
<dbReference type="InterPro" id="IPR009662">
    <property type="entry name" value="Malonate_deCO2ase_dsu"/>
</dbReference>
<dbReference type="NCBIfam" id="TIGR03130">
    <property type="entry name" value="malonate_delta"/>
    <property type="match status" value="1"/>
</dbReference>
<dbReference type="NCBIfam" id="NF002293">
    <property type="entry name" value="PRK01220.1"/>
    <property type="match status" value="1"/>
</dbReference>
<dbReference type="Pfam" id="PF06857">
    <property type="entry name" value="ACP"/>
    <property type="match status" value="1"/>
</dbReference>
<keyword id="KW-0963">Cytoplasm</keyword>
<keyword id="KW-0597">Phosphoprotein</keyword>
<sequence length="99" mass="10155">METLTFEFPAGAPARGRALAGCVGSGDLEVLLEPAAGGALSIEVVTSVNGSGPRWQQLFARVFAAATAPAAAIRIHDFGATPGVVRLRLEQALEEAGHD</sequence>
<feature type="chain" id="PRO_1000045564" description="Malonate decarboxylase acyl carrier protein">
    <location>
        <begin position="1"/>
        <end position="99"/>
    </location>
</feature>
<feature type="modified residue" description="O-(phosphoribosyl dephospho-coenzyme A)serine" evidence="1">
    <location>
        <position position="25"/>
    </location>
</feature>
<accession>A6UY05</accession>
<comment type="function">
    <text evidence="1">Subunit of malonate decarboxylase, it is an acyl carrier protein to which acetyl and malonyl thioester residues are bound via a 2'-(5''-phosphoribosyl)-3'-dephospho-CoA prosthetic group and turn over during the catalytic mechanism.</text>
</comment>
<comment type="subcellular location">
    <subcellularLocation>
        <location evidence="1">Cytoplasm</location>
    </subcellularLocation>
</comment>
<comment type="PTM">
    <text evidence="1">Covalently binds the prosthetic group of malonate decarboxylase.</text>
</comment>
<comment type="similarity">
    <text evidence="1">Belongs to the MdcC family.</text>
</comment>
<gene>
    <name evidence="1" type="primary">mdcC</name>
    <name type="ordered locus">PSPA7_0294</name>
</gene>